<reference key="1">
    <citation type="journal article" date="2003" name="J. Bacteriol.">
        <title>Comparative analyses of the complete genome sequences of Pierce's disease and citrus variegated chlorosis strains of Xylella fastidiosa.</title>
        <authorList>
            <person name="Van Sluys M.A."/>
            <person name="de Oliveira M.C."/>
            <person name="Monteiro-Vitorello C.B."/>
            <person name="Miyaki C.Y."/>
            <person name="Furlan L.R."/>
            <person name="Camargo L.E.A."/>
            <person name="da Silva A.C.R."/>
            <person name="Moon D.H."/>
            <person name="Takita M.A."/>
            <person name="Lemos E.G.M."/>
            <person name="Machado M.A."/>
            <person name="Ferro M.I.T."/>
            <person name="da Silva F.R."/>
            <person name="Goldman M.H.S."/>
            <person name="Goldman G.H."/>
            <person name="Lemos M.V.F."/>
            <person name="El-Dorry H."/>
            <person name="Tsai S.M."/>
            <person name="Carrer H."/>
            <person name="Carraro D.M."/>
            <person name="de Oliveira R.C."/>
            <person name="Nunes L.R."/>
            <person name="Siqueira W.J."/>
            <person name="Coutinho L.L."/>
            <person name="Kimura E.T."/>
            <person name="Ferro E.S."/>
            <person name="Harakava R."/>
            <person name="Kuramae E.E."/>
            <person name="Marino C.L."/>
            <person name="Giglioti E."/>
            <person name="Abreu I.L."/>
            <person name="Alves L.M.C."/>
            <person name="do Amaral A.M."/>
            <person name="Baia G.S."/>
            <person name="Blanco S.R."/>
            <person name="Brito M.S."/>
            <person name="Cannavan F.S."/>
            <person name="Celestino A.V."/>
            <person name="da Cunha A.F."/>
            <person name="Fenille R.C."/>
            <person name="Ferro J.A."/>
            <person name="Formighieri E.F."/>
            <person name="Kishi L.T."/>
            <person name="Leoni S.G."/>
            <person name="Oliveira A.R."/>
            <person name="Rosa V.E. Jr."/>
            <person name="Sassaki F.T."/>
            <person name="Sena J.A.D."/>
            <person name="de Souza A.A."/>
            <person name="Truffi D."/>
            <person name="Tsukumo F."/>
            <person name="Yanai G.M."/>
            <person name="Zaros L.G."/>
            <person name="Civerolo E.L."/>
            <person name="Simpson A.J.G."/>
            <person name="Almeida N.F. Jr."/>
            <person name="Setubal J.C."/>
            <person name="Kitajima J.P."/>
        </authorList>
    </citation>
    <scope>NUCLEOTIDE SEQUENCE [LARGE SCALE GENOMIC DNA]</scope>
    <source>
        <strain>Temecula1 / ATCC 700964</strain>
    </source>
</reference>
<sequence>MKALFRACRIGKVMLRYRLDTLLDGTAVERWLRLAKPFVPRISAEIVEQSRGRRLRLALQELGPIFVKFGQILSTRRDLVPQDIGDELVMLQDRVEPFEGQTARSIIETALGKSVESAFAHFDTVPLASASISQVHAATLHDRRAVVVKVLRPDIEHQISDDIALLKSLATLVEHTHPNADKIRPREIVAEIETTLAAELDLQREGANASVLRRFWEASDDIYVPEVIWSHTAERVLTLERMYGIPSDDIALLDASGIDRKALSSKGIRVFYTQVFRDNFFHADAHSGNIWVDSDPARKSNPRFIVLDFGIMGQLSQKDQYYLAENFMAIFHKDYRRIAELHVEAGWIPPHVRIEELEAAARSVCEPYFTRPLSQISLAEVMMKLFHVARRYQLTLQPQLILLQKTLLNIEGVGRQLDPELDIWVVARPVLERILRARYSPRHALKELNKRLPEIMTHAPDTPRLIHTWLVQQVESRKQNDVYLQQIRALAMTLQGLQRRVVNAIVGSGLLVAAAVLYGLHPDGLYLGTIPVWSLISGCIGALALFSAWWRS</sequence>
<name>UBIB_XYLFT</name>
<accession>Q87CN1</accession>
<organism>
    <name type="scientific">Xylella fastidiosa (strain Temecula1 / ATCC 700964)</name>
    <dbReference type="NCBI Taxonomy" id="183190"/>
    <lineage>
        <taxon>Bacteria</taxon>
        <taxon>Pseudomonadati</taxon>
        <taxon>Pseudomonadota</taxon>
        <taxon>Gammaproteobacteria</taxon>
        <taxon>Lysobacterales</taxon>
        <taxon>Lysobacteraceae</taxon>
        <taxon>Xylella</taxon>
    </lineage>
</organism>
<protein>
    <recommendedName>
        <fullName evidence="1">Probable protein kinase UbiB</fullName>
        <ecNumber evidence="1">2.7.-.-</ecNumber>
    </recommendedName>
    <alternativeName>
        <fullName evidence="1">Ubiquinone biosynthesis protein UbiB</fullName>
    </alternativeName>
</protein>
<keyword id="KW-0067">ATP-binding</keyword>
<keyword id="KW-0997">Cell inner membrane</keyword>
<keyword id="KW-1003">Cell membrane</keyword>
<keyword id="KW-0418">Kinase</keyword>
<keyword id="KW-0472">Membrane</keyword>
<keyword id="KW-0547">Nucleotide-binding</keyword>
<keyword id="KW-1185">Reference proteome</keyword>
<keyword id="KW-0808">Transferase</keyword>
<keyword id="KW-0812">Transmembrane</keyword>
<keyword id="KW-1133">Transmembrane helix</keyword>
<keyword id="KW-0831">Ubiquinone biosynthesis</keyword>
<proteinExistence type="inferred from homology"/>
<comment type="function">
    <text evidence="1">Is probably a protein kinase regulator of UbiI activity which is involved in aerobic coenzyme Q (ubiquinone) biosynthesis.</text>
</comment>
<comment type="pathway">
    <text>Cofactor biosynthesis; ubiquinone biosynthesis [regulation].</text>
</comment>
<comment type="subcellular location">
    <subcellularLocation>
        <location evidence="1">Cell inner membrane</location>
        <topology evidence="1">Multi-pass membrane protein</topology>
    </subcellularLocation>
</comment>
<comment type="similarity">
    <text evidence="1">Belongs to the ABC1 family. UbiB subfamily.</text>
</comment>
<evidence type="ECO:0000255" key="1">
    <source>
        <dbReference type="HAMAP-Rule" id="MF_00414"/>
    </source>
</evidence>
<feature type="chain" id="PRO_0000200727" description="Probable protein kinase UbiB">
    <location>
        <begin position="1"/>
        <end position="552"/>
    </location>
</feature>
<feature type="transmembrane region" description="Helical" evidence="1">
    <location>
        <begin position="501"/>
        <end position="521"/>
    </location>
</feature>
<feature type="transmembrane region" description="Helical" evidence="1">
    <location>
        <begin position="530"/>
        <end position="550"/>
    </location>
</feature>
<feature type="domain" description="Protein kinase" evidence="1">
    <location>
        <begin position="121"/>
        <end position="504"/>
    </location>
</feature>
<feature type="active site" description="Proton acceptor" evidence="1">
    <location>
        <position position="284"/>
    </location>
</feature>
<feature type="binding site" evidence="1">
    <location>
        <begin position="127"/>
        <end position="135"/>
    </location>
    <ligand>
        <name>ATP</name>
        <dbReference type="ChEBI" id="CHEBI:30616"/>
    </ligand>
</feature>
<feature type="binding site" evidence="1">
    <location>
        <position position="149"/>
    </location>
    <ligand>
        <name>ATP</name>
        <dbReference type="ChEBI" id="CHEBI:30616"/>
    </ligand>
</feature>
<gene>
    <name evidence="1" type="primary">ubiB</name>
    <name type="ordered locus">PD_1034</name>
</gene>
<dbReference type="EC" id="2.7.-.-" evidence="1"/>
<dbReference type="EMBL" id="AE009442">
    <property type="protein sequence ID" value="AAO28894.1"/>
    <property type="molecule type" value="Genomic_DNA"/>
</dbReference>
<dbReference type="RefSeq" id="WP_004572819.1">
    <property type="nucleotide sequence ID" value="NC_004556.1"/>
</dbReference>
<dbReference type="SMR" id="Q87CN1"/>
<dbReference type="GeneID" id="93904817"/>
<dbReference type="KEGG" id="xft:PD_1034"/>
<dbReference type="HOGENOM" id="CLU_006533_0_0_6"/>
<dbReference type="UniPathway" id="UPA00232"/>
<dbReference type="Proteomes" id="UP000002516">
    <property type="component" value="Chromosome"/>
</dbReference>
<dbReference type="GO" id="GO:0005886">
    <property type="term" value="C:plasma membrane"/>
    <property type="evidence" value="ECO:0007669"/>
    <property type="project" value="UniProtKB-SubCell"/>
</dbReference>
<dbReference type="GO" id="GO:0005524">
    <property type="term" value="F:ATP binding"/>
    <property type="evidence" value="ECO:0007669"/>
    <property type="project" value="UniProtKB-KW"/>
</dbReference>
<dbReference type="GO" id="GO:0004672">
    <property type="term" value="F:protein kinase activity"/>
    <property type="evidence" value="ECO:0007669"/>
    <property type="project" value="UniProtKB-UniRule"/>
</dbReference>
<dbReference type="GO" id="GO:0010795">
    <property type="term" value="P:regulation of ubiquinone biosynthetic process"/>
    <property type="evidence" value="ECO:0007669"/>
    <property type="project" value="UniProtKB-UniRule"/>
</dbReference>
<dbReference type="GO" id="GO:0006744">
    <property type="term" value="P:ubiquinone biosynthetic process"/>
    <property type="evidence" value="ECO:0007669"/>
    <property type="project" value="UniProtKB-UniPathway"/>
</dbReference>
<dbReference type="CDD" id="cd13972">
    <property type="entry name" value="UbiB"/>
    <property type="match status" value="1"/>
</dbReference>
<dbReference type="HAMAP" id="MF_00414">
    <property type="entry name" value="UbiB"/>
    <property type="match status" value="1"/>
</dbReference>
<dbReference type="InterPro" id="IPR004147">
    <property type="entry name" value="ABC1_dom"/>
</dbReference>
<dbReference type="InterPro" id="IPR011009">
    <property type="entry name" value="Kinase-like_dom_sf"/>
</dbReference>
<dbReference type="InterPro" id="IPR010232">
    <property type="entry name" value="UbiB"/>
</dbReference>
<dbReference type="InterPro" id="IPR045308">
    <property type="entry name" value="UbiB_bact"/>
</dbReference>
<dbReference type="InterPro" id="IPR050154">
    <property type="entry name" value="UbiB_kinase"/>
</dbReference>
<dbReference type="NCBIfam" id="NF003404">
    <property type="entry name" value="PRK04750.1"/>
    <property type="match status" value="1"/>
</dbReference>
<dbReference type="NCBIfam" id="TIGR01982">
    <property type="entry name" value="UbiB"/>
    <property type="match status" value="1"/>
</dbReference>
<dbReference type="PANTHER" id="PTHR10566">
    <property type="entry name" value="CHAPERONE-ACTIVITY OF BC1 COMPLEX CABC1 -RELATED"/>
    <property type="match status" value="1"/>
</dbReference>
<dbReference type="PANTHER" id="PTHR10566:SF113">
    <property type="entry name" value="PROTEIN ACTIVITY OF BC1 COMPLEX KINASE 7, CHLOROPLASTIC"/>
    <property type="match status" value="1"/>
</dbReference>
<dbReference type="Pfam" id="PF03109">
    <property type="entry name" value="ABC1"/>
    <property type="match status" value="1"/>
</dbReference>
<dbReference type="SUPFAM" id="SSF56112">
    <property type="entry name" value="Protein kinase-like (PK-like)"/>
    <property type="match status" value="1"/>
</dbReference>